<name>NDK_PHOPR</name>
<gene>
    <name evidence="1" type="primary">ndk</name>
    <name type="ordered locus">PBPRA0759</name>
</gene>
<sequence length="142" mass="16002">MTIEKTFSIIKPDAVKRNLIGAIYQRFENAGLKIVASKMVHLDATKAQGFYAEHEEKPFFNELVEFMTSGPVMVQVLEGEDAIHRYRELMGTTNPENAACGTIRSDFALSMRYNSVHGSDSPESAAREIAYFFTEDEICPRD</sequence>
<accession>Q6LU53</accession>
<protein>
    <recommendedName>
        <fullName evidence="1">Nucleoside diphosphate kinase</fullName>
        <shortName evidence="1">NDK</shortName>
        <shortName evidence="1">NDP kinase</shortName>
        <ecNumber evidence="1">2.7.4.6</ecNumber>
    </recommendedName>
    <alternativeName>
        <fullName evidence="1">Nucleoside-2-P kinase</fullName>
    </alternativeName>
</protein>
<feature type="chain" id="PRO_0000137019" description="Nucleoside diphosphate kinase">
    <location>
        <begin position="1"/>
        <end position="142"/>
    </location>
</feature>
<feature type="active site" description="Pros-phosphohistidine intermediate" evidence="1">
    <location>
        <position position="117"/>
    </location>
</feature>
<feature type="binding site" evidence="1">
    <location>
        <position position="11"/>
    </location>
    <ligand>
        <name>ATP</name>
        <dbReference type="ChEBI" id="CHEBI:30616"/>
    </ligand>
</feature>
<feature type="binding site" evidence="1">
    <location>
        <position position="59"/>
    </location>
    <ligand>
        <name>ATP</name>
        <dbReference type="ChEBI" id="CHEBI:30616"/>
    </ligand>
</feature>
<feature type="binding site" evidence="1">
    <location>
        <position position="87"/>
    </location>
    <ligand>
        <name>ATP</name>
        <dbReference type="ChEBI" id="CHEBI:30616"/>
    </ligand>
</feature>
<feature type="binding site" evidence="1">
    <location>
        <position position="93"/>
    </location>
    <ligand>
        <name>ATP</name>
        <dbReference type="ChEBI" id="CHEBI:30616"/>
    </ligand>
</feature>
<feature type="binding site" evidence="1">
    <location>
        <position position="104"/>
    </location>
    <ligand>
        <name>ATP</name>
        <dbReference type="ChEBI" id="CHEBI:30616"/>
    </ligand>
</feature>
<feature type="binding site" evidence="1">
    <location>
        <position position="114"/>
    </location>
    <ligand>
        <name>ATP</name>
        <dbReference type="ChEBI" id="CHEBI:30616"/>
    </ligand>
</feature>
<comment type="function">
    <text evidence="1">Major role in the synthesis of nucleoside triphosphates other than ATP. The ATP gamma phosphate is transferred to the NDP beta phosphate via a ping-pong mechanism, using a phosphorylated active-site intermediate.</text>
</comment>
<comment type="catalytic activity">
    <reaction evidence="1">
        <text>a 2'-deoxyribonucleoside 5'-diphosphate + ATP = a 2'-deoxyribonucleoside 5'-triphosphate + ADP</text>
        <dbReference type="Rhea" id="RHEA:44640"/>
        <dbReference type="ChEBI" id="CHEBI:30616"/>
        <dbReference type="ChEBI" id="CHEBI:61560"/>
        <dbReference type="ChEBI" id="CHEBI:73316"/>
        <dbReference type="ChEBI" id="CHEBI:456216"/>
        <dbReference type="EC" id="2.7.4.6"/>
    </reaction>
</comment>
<comment type="catalytic activity">
    <reaction evidence="1">
        <text>a ribonucleoside 5'-diphosphate + ATP = a ribonucleoside 5'-triphosphate + ADP</text>
        <dbReference type="Rhea" id="RHEA:18113"/>
        <dbReference type="ChEBI" id="CHEBI:30616"/>
        <dbReference type="ChEBI" id="CHEBI:57930"/>
        <dbReference type="ChEBI" id="CHEBI:61557"/>
        <dbReference type="ChEBI" id="CHEBI:456216"/>
        <dbReference type="EC" id="2.7.4.6"/>
    </reaction>
</comment>
<comment type="cofactor">
    <cofactor evidence="1">
        <name>Mg(2+)</name>
        <dbReference type="ChEBI" id="CHEBI:18420"/>
    </cofactor>
</comment>
<comment type="subunit">
    <text evidence="1">Homotetramer.</text>
</comment>
<comment type="subcellular location">
    <subcellularLocation>
        <location evidence="1">Cytoplasm</location>
    </subcellularLocation>
</comment>
<comment type="similarity">
    <text evidence="1">Belongs to the NDK family.</text>
</comment>
<keyword id="KW-0067">ATP-binding</keyword>
<keyword id="KW-0963">Cytoplasm</keyword>
<keyword id="KW-0418">Kinase</keyword>
<keyword id="KW-0460">Magnesium</keyword>
<keyword id="KW-0479">Metal-binding</keyword>
<keyword id="KW-0546">Nucleotide metabolism</keyword>
<keyword id="KW-0547">Nucleotide-binding</keyword>
<keyword id="KW-0597">Phosphoprotein</keyword>
<keyword id="KW-1185">Reference proteome</keyword>
<keyword id="KW-0808">Transferase</keyword>
<organism>
    <name type="scientific">Photobacterium profundum (strain SS9)</name>
    <dbReference type="NCBI Taxonomy" id="298386"/>
    <lineage>
        <taxon>Bacteria</taxon>
        <taxon>Pseudomonadati</taxon>
        <taxon>Pseudomonadota</taxon>
        <taxon>Gammaproteobacteria</taxon>
        <taxon>Vibrionales</taxon>
        <taxon>Vibrionaceae</taxon>
        <taxon>Photobacterium</taxon>
    </lineage>
</organism>
<dbReference type="EC" id="2.7.4.6" evidence="1"/>
<dbReference type="EMBL" id="CR378665">
    <property type="protein sequence ID" value="CAG19172.1"/>
    <property type="molecule type" value="Genomic_DNA"/>
</dbReference>
<dbReference type="RefSeq" id="WP_011217514.1">
    <property type="nucleotide sequence ID" value="NC_006370.1"/>
</dbReference>
<dbReference type="SMR" id="Q6LU53"/>
<dbReference type="STRING" id="298386.PBPRA0759"/>
<dbReference type="KEGG" id="ppr:PBPRA0759"/>
<dbReference type="eggNOG" id="COG0105">
    <property type="taxonomic scope" value="Bacteria"/>
</dbReference>
<dbReference type="HOGENOM" id="CLU_060216_8_1_6"/>
<dbReference type="Proteomes" id="UP000000593">
    <property type="component" value="Chromosome 1"/>
</dbReference>
<dbReference type="GO" id="GO:0005737">
    <property type="term" value="C:cytoplasm"/>
    <property type="evidence" value="ECO:0007669"/>
    <property type="project" value="UniProtKB-SubCell"/>
</dbReference>
<dbReference type="GO" id="GO:0005524">
    <property type="term" value="F:ATP binding"/>
    <property type="evidence" value="ECO:0007669"/>
    <property type="project" value="UniProtKB-UniRule"/>
</dbReference>
<dbReference type="GO" id="GO:0046872">
    <property type="term" value="F:metal ion binding"/>
    <property type="evidence" value="ECO:0007669"/>
    <property type="project" value="UniProtKB-KW"/>
</dbReference>
<dbReference type="GO" id="GO:0004550">
    <property type="term" value="F:nucleoside diphosphate kinase activity"/>
    <property type="evidence" value="ECO:0007669"/>
    <property type="project" value="UniProtKB-UniRule"/>
</dbReference>
<dbReference type="GO" id="GO:0006241">
    <property type="term" value="P:CTP biosynthetic process"/>
    <property type="evidence" value="ECO:0007669"/>
    <property type="project" value="UniProtKB-UniRule"/>
</dbReference>
<dbReference type="GO" id="GO:0006183">
    <property type="term" value="P:GTP biosynthetic process"/>
    <property type="evidence" value="ECO:0007669"/>
    <property type="project" value="UniProtKB-UniRule"/>
</dbReference>
<dbReference type="GO" id="GO:0006228">
    <property type="term" value="P:UTP biosynthetic process"/>
    <property type="evidence" value="ECO:0007669"/>
    <property type="project" value="UniProtKB-UniRule"/>
</dbReference>
<dbReference type="CDD" id="cd04413">
    <property type="entry name" value="NDPk_I"/>
    <property type="match status" value="1"/>
</dbReference>
<dbReference type="FunFam" id="3.30.70.141:FF:000001">
    <property type="entry name" value="Nucleoside diphosphate kinase"/>
    <property type="match status" value="1"/>
</dbReference>
<dbReference type="Gene3D" id="3.30.70.141">
    <property type="entry name" value="Nucleoside diphosphate kinase-like domain"/>
    <property type="match status" value="1"/>
</dbReference>
<dbReference type="HAMAP" id="MF_00451">
    <property type="entry name" value="NDP_kinase"/>
    <property type="match status" value="1"/>
</dbReference>
<dbReference type="InterPro" id="IPR034907">
    <property type="entry name" value="NDK-like_dom"/>
</dbReference>
<dbReference type="InterPro" id="IPR036850">
    <property type="entry name" value="NDK-like_dom_sf"/>
</dbReference>
<dbReference type="InterPro" id="IPR001564">
    <property type="entry name" value="Nucleoside_diP_kinase"/>
</dbReference>
<dbReference type="InterPro" id="IPR023005">
    <property type="entry name" value="Nucleoside_diP_kinase_AS"/>
</dbReference>
<dbReference type="NCBIfam" id="NF001908">
    <property type="entry name" value="PRK00668.1"/>
    <property type="match status" value="1"/>
</dbReference>
<dbReference type="PANTHER" id="PTHR46161">
    <property type="entry name" value="NUCLEOSIDE DIPHOSPHATE KINASE"/>
    <property type="match status" value="1"/>
</dbReference>
<dbReference type="PANTHER" id="PTHR46161:SF3">
    <property type="entry name" value="NUCLEOSIDE DIPHOSPHATE KINASE DDB_G0292928-RELATED"/>
    <property type="match status" value="1"/>
</dbReference>
<dbReference type="Pfam" id="PF00334">
    <property type="entry name" value="NDK"/>
    <property type="match status" value="1"/>
</dbReference>
<dbReference type="PRINTS" id="PR01243">
    <property type="entry name" value="NUCDPKINASE"/>
</dbReference>
<dbReference type="SMART" id="SM00562">
    <property type="entry name" value="NDK"/>
    <property type="match status" value="1"/>
</dbReference>
<dbReference type="SUPFAM" id="SSF54919">
    <property type="entry name" value="Nucleoside diphosphate kinase, NDK"/>
    <property type="match status" value="1"/>
</dbReference>
<dbReference type="PROSITE" id="PS00469">
    <property type="entry name" value="NDPK"/>
    <property type="match status" value="1"/>
</dbReference>
<dbReference type="PROSITE" id="PS51374">
    <property type="entry name" value="NDPK_LIKE"/>
    <property type="match status" value="1"/>
</dbReference>
<evidence type="ECO:0000255" key="1">
    <source>
        <dbReference type="HAMAP-Rule" id="MF_00451"/>
    </source>
</evidence>
<proteinExistence type="inferred from homology"/>
<reference key="1">
    <citation type="journal article" date="2005" name="Science">
        <title>Life at depth: Photobacterium profundum genome sequence and expression analysis.</title>
        <authorList>
            <person name="Vezzi A."/>
            <person name="Campanaro S."/>
            <person name="D'Angelo M."/>
            <person name="Simonato F."/>
            <person name="Vitulo N."/>
            <person name="Lauro F.M."/>
            <person name="Cestaro A."/>
            <person name="Malacrida G."/>
            <person name="Simionati B."/>
            <person name="Cannata N."/>
            <person name="Romualdi C."/>
            <person name="Bartlett D.H."/>
            <person name="Valle G."/>
        </authorList>
    </citation>
    <scope>NUCLEOTIDE SEQUENCE [LARGE SCALE GENOMIC DNA]</scope>
    <source>
        <strain>ATCC BAA-1253 / SS9</strain>
    </source>
</reference>